<accession>Q6FZQ6</accession>
<organism>
    <name type="scientific">Bartonella quintana (strain Toulouse)</name>
    <name type="common">Rochalimaea quintana</name>
    <dbReference type="NCBI Taxonomy" id="283165"/>
    <lineage>
        <taxon>Bacteria</taxon>
        <taxon>Pseudomonadati</taxon>
        <taxon>Pseudomonadota</taxon>
        <taxon>Alphaproteobacteria</taxon>
        <taxon>Hyphomicrobiales</taxon>
        <taxon>Bartonellaceae</taxon>
        <taxon>Bartonella</taxon>
    </lineage>
</organism>
<name>RL13_BARQU</name>
<comment type="function">
    <text evidence="1">This protein is one of the early assembly proteins of the 50S ribosomal subunit, although it is not seen to bind rRNA by itself. It is important during the early stages of 50S assembly.</text>
</comment>
<comment type="subunit">
    <text evidence="1">Part of the 50S ribosomal subunit.</text>
</comment>
<comment type="similarity">
    <text evidence="1">Belongs to the universal ribosomal protein uL13 family.</text>
</comment>
<protein>
    <recommendedName>
        <fullName evidence="1">Large ribosomal subunit protein uL13</fullName>
    </recommendedName>
    <alternativeName>
        <fullName evidence="2">50S ribosomal protein L13</fullName>
    </alternativeName>
</protein>
<sequence length="154" mass="17422">MATFSQKPTEVVKKWVIIDAENLVLGRLAAFVANRLRGKHKATFTPHVDDGDNVIVINADKIVLTGKKYTDKKYYWHTGYIGGIKERTARQILEGRFPERVVEKAVERMIPRGPLGRRQLRNLHVYAGSQNPHAAQQPEALDVGALNRKNKRIA</sequence>
<feature type="chain" id="PRO_1000055345" description="Large ribosomal subunit protein uL13">
    <location>
        <begin position="1"/>
        <end position="154"/>
    </location>
</feature>
<evidence type="ECO:0000255" key="1">
    <source>
        <dbReference type="HAMAP-Rule" id="MF_01366"/>
    </source>
</evidence>
<evidence type="ECO:0000305" key="2"/>
<gene>
    <name evidence="1" type="primary">rplM</name>
    <name type="ordered locus">BQ06630</name>
</gene>
<reference key="1">
    <citation type="journal article" date="2004" name="Proc. Natl. Acad. Sci. U.S.A.">
        <title>The louse-borne human pathogen Bartonella quintana is a genomic derivative of the zoonotic agent Bartonella henselae.</title>
        <authorList>
            <person name="Alsmark U.C.M."/>
            <person name="Frank A.C."/>
            <person name="Karlberg E.O."/>
            <person name="Legault B.-A."/>
            <person name="Ardell D.H."/>
            <person name="Canbaeck B."/>
            <person name="Eriksson A.-S."/>
            <person name="Naeslund A.K."/>
            <person name="Handley S.A."/>
            <person name="Huvet M."/>
            <person name="La Scola B."/>
            <person name="Holmberg M."/>
            <person name="Andersson S.G.E."/>
        </authorList>
    </citation>
    <scope>NUCLEOTIDE SEQUENCE [LARGE SCALE GENOMIC DNA]</scope>
    <source>
        <strain>Toulouse</strain>
    </source>
</reference>
<keyword id="KW-0687">Ribonucleoprotein</keyword>
<keyword id="KW-0689">Ribosomal protein</keyword>
<proteinExistence type="inferred from homology"/>
<dbReference type="EMBL" id="BX897700">
    <property type="protein sequence ID" value="CAF26153.1"/>
    <property type="molecule type" value="Genomic_DNA"/>
</dbReference>
<dbReference type="RefSeq" id="WP_011179411.1">
    <property type="nucleotide sequence ID" value="NC_005955.1"/>
</dbReference>
<dbReference type="SMR" id="Q6FZQ6"/>
<dbReference type="KEGG" id="bqu:BQ06630"/>
<dbReference type="eggNOG" id="COG0102">
    <property type="taxonomic scope" value="Bacteria"/>
</dbReference>
<dbReference type="HOGENOM" id="CLU_082184_2_0_5"/>
<dbReference type="OrthoDB" id="9801330at2"/>
<dbReference type="Proteomes" id="UP000000597">
    <property type="component" value="Chromosome"/>
</dbReference>
<dbReference type="GO" id="GO:0022625">
    <property type="term" value="C:cytosolic large ribosomal subunit"/>
    <property type="evidence" value="ECO:0007669"/>
    <property type="project" value="TreeGrafter"/>
</dbReference>
<dbReference type="GO" id="GO:0003729">
    <property type="term" value="F:mRNA binding"/>
    <property type="evidence" value="ECO:0007669"/>
    <property type="project" value="TreeGrafter"/>
</dbReference>
<dbReference type="GO" id="GO:0003735">
    <property type="term" value="F:structural constituent of ribosome"/>
    <property type="evidence" value="ECO:0007669"/>
    <property type="project" value="InterPro"/>
</dbReference>
<dbReference type="GO" id="GO:0017148">
    <property type="term" value="P:negative regulation of translation"/>
    <property type="evidence" value="ECO:0007669"/>
    <property type="project" value="TreeGrafter"/>
</dbReference>
<dbReference type="GO" id="GO:0006412">
    <property type="term" value="P:translation"/>
    <property type="evidence" value="ECO:0007669"/>
    <property type="project" value="UniProtKB-UniRule"/>
</dbReference>
<dbReference type="CDD" id="cd00392">
    <property type="entry name" value="Ribosomal_L13"/>
    <property type="match status" value="1"/>
</dbReference>
<dbReference type="FunFam" id="3.90.1180.10:FF:000001">
    <property type="entry name" value="50S ribosomal protein L13"/>
    <property type="match status" value="1"/>
</dbReference>
<dbReference type="Gene3D" id="3.90.1180.10">
    <property type="entry name" value="Ribosomal protein L13"/>
    <property type="match status" value="1"/>
</dbReference>
<dbReference type="HAMAP" id="MF_01366">
    <property type="entry name" value="Ribosomal_uL13"/>
    <property type="match status" value="1"/>
</dbReference>
<dbReference type="InterPro" id="IPR005822">
    <property type="entry name" value="Ribosomal_uL13"/>
</dbReference>
<dbReference type="InterPro" id="IPR005823">
    <property type="entry name" value="Ribosomal_uL13_bac-type"/>
</dbReference>
<dbReference type="InterPro" id="IPR036899">
    <property type="entry name" value="Ribosomal_uL13_sf"/>
</dbReference>
<dbReference type="NCBIfam" id="TIGR01066">
    <property type="entry name" value="rplM_bact"/>
    <property type="match status" value="1"/>
</dbReference>
<dbReference type="PANTHER" id="PTHR11545:SF2">
    <property type="entry name" value="LARGE RIBOSOMAL SUBUNIT PROTEIN UL13M"/>
    <property type="match status" value="1"/>
</dbReference>
<dbReference type="PANTHER" id="PTHR11545">
    <property type="entry name" value="RIBOSOMAL PROTEIN L13"/>
    <property type="match status" value="1"/>
</dbReference>
<dbReference type="Pfam" id="PF00572">
    <property type="entry name" value="Ribosomal_L13"/>
    <property type="match status" value="1"/>
</dbReference>
<dbReference type="PIRSF" id="PIRSF002181">
    <property type="entry name" value="Ribosomal_L13"/>
    <property type="match status" value="1"/>
</dbReference>
<dbReference type="SUPFAM" id="SSF52161">
    <property type="entry name" value="Ribosomal protein L13"/>
    <property type="match status" value="1"/>
</dbReference>